<proteinExistence type="inferred from homology"/>
<name>CTAA2_ACICJ</name>
<feature type="chain" id="PRO_0000349007" description="Heme A synthase 2">
    <location>
        <begin position="1"/>
        <end position="367"/>
    </location>
</feature>
<feature type="transmembrane region" description="Helical" evidence="1">
    <location>
        <begin position="28"/>
        <end position="48"/>
    </location>
</feature>
<feature type="transmembrane region" description="Helical" evidence="1">
    <location>
        <begin position="114"/>
        <end position="134"/>
    </location>
</feature>
<feature type="transmembrane region" description="Helical" evidence="1">
    <location>
        <begin position="143"/>
        <end position="163"/>
    </location>
</feature>
<feature type="transmembrane region" description="Helical" evidence="1">
    <location>
        <begin position="180"/>
        <end position="200"/>
    </location>
</feature>
<feature type="transmembrane region" description="Helical" evidence="1">
    <location>
        <begin position="221"/>
        <end position="241"/>
    </location>
</feature>
<feature type="transmembrane region" description="Helical" evidence="1">
    <location>
        <begin position="286"/>
        <end position="306"/>
    </location>
</feature>
<feature type="transmembrane region" description="Helical" evidence="1">
    <location>
        <begin position="314"/>
        <end position="334"/>
    </location>
</feature>
<feature type="transmembrane region" description="Helical" evidence="1">
    <location>
        <begin position="340"/>
        <end position="360"/>
    </location>
</feature>
<feature type="binding site" description="axial binding residue" evidence="1">
    <location>
        <position position="284"/>
    </location>
    <ligand>
        <name>heme</name>
        <dbReference type="ChEBI" id="CHEBI:30413"/>
    </ligand>
    <ligandPart>
        <name>Fe</name>
        <dbReference type="ChEBI" id="CHEBI:18248"/>
    </ligandPart>
</feature>
<feature type="binding site" description="axial binding residue" evidence="1">
    <location>
        <position position="344"/>
    </location>
    <ligand>
        <name>heme</name>
        <dbReference type="ChEBI" id="CHEBI:30413"/>
    </ligand>
    <ligandPart>
        <name>Fe</name>
        <dbReference type="ChEBI" id="CHEBI:18248"/>
    </ligandPart>
</feature>
<evidence type="ECO:0000255" key="1">
    <source>
        <dbReference type="HAMAP-Rule" id="MF_01665"/>
    </source>
</evidence>
<protein>
    <recommendedName>
        <fullName evidence="1">Heme A synthase 2</fullName>
        <shortName evidence="1">HAS 2</shortName>
        <ecNumber evidence="1">1.17.99.9</ecNumber>
    </recommendedName>
    <alternativeName>
        <fullName evidence="1">Cytochrome aa3-controlling protein 2</fullName>
    </alternativeName>
</protein>
<gene>
    <name evidence="1" type="primary">ctaA2</name>
    <name type="ordered locus">Acry_1225</name>
</gene>
<comment type="function">
    <text evidence="1">Catalyzes the conversion of heme O to heme A by two successive hydroxylations of the methyl group at C8. The first hydroxylation forms heme I, the second hydroxylation results in an unstable dihydroxymethyl group, which spontaneously dehydrates, resulting in the formyl group of heme A.</text>
</comment>
<comment type="catalytic activity">
    <reaction evidence="1">
        <text>Fe(II)-heme o + 2 A + H2O = Fe(II)-heme a + 2 AH2</text>
        <dbReference type="Rhea" id="RHEA:63388"/>
        <dbReference type="ChEBI" id="CHEBI:13193"/>
        <dbReference type="ChEBI" id="CHEBI:15377"/>
        <dbReference type="ChEBI" id="CHEBI:17499"/>
        <dbReference type="ChEBI" id="CHEBI:60530"/>
        <dbReference type="ChEBI" id="CHEBI:61715"/>
        <dbReference type="EC" id="1.17.99.9"/>
    </reaction>
    <physiologicalReaction direction="left-to-right" evidence="1">
        <dbReference type="Rhea" id="RHEA:63389"/>
    </physiologicalReaction>
</comment>
<comment type="cofactor">
    <cofactor evidence="1">
        <name>heme b</name>
        <dbReference type="ChEBI" id="CHEBI:60344"/>
    </cofactor>
</comment>
<comment type="pathway">
    <text evidence="1">Porphyrin-containing compound metabolism; heme A biosynthesis; heme A from heme O: step 1/1.</text>
</comment>
<comment type="subunit">
    <text evidence="1">Interacts with CtaB.</text>
</comment>
<comment type="subcellular location">
    <subcellularLocation>
        <location evidence="1">Cell membrane</location>
        <topology evidence="1">Multi-pass membrane protein</topology>
    </subcellularLocation>
</comment>
<comment type="similarity">
    <text evidence="1">Belongs to the COX15/CtaA family. Type 2 subfamily.</text>
</comment>
<dbReference type="EC" id="1.17.99.9" evidence="1"/>
<dbReference type="EMBL" id="CP000697">
    <property type="protein sequence ID" value="ABQ30436.1"/>
    <property type="molecule type" value="Genomic_DNA"/>
</dbReference>
<dbReference type="RefSeq" id="WP_011942086.1">
    <property type="nucleotide sequence ID" value="NC_009484.1"/>
</dbReference>
<dbReference type="STRING" id="349163.Acry_1225"/>
<dbReference type="KEGG" id="acr:Acry_1225"/>
<dbReference type="eggNOG" id="COG1612">
    <property type="taxonomic scope" value="Bacteria"/>
</dbReference>
<dbReference type="HOGENOM" id="CLU_017627_0_0_5"/>
<dbReference type="UniPathway" id="UPA00269">
    <property type="reaction ID" value="UER00713"/>
</dbReference>
<dbReference type="Proteomes" id="UP000000245">
    <property type="component" value="Chromosome"/>
</dbReference>
<dbReference type="GO" id="GO:0005886">
    <property type="term" value="C:plasma membrane"/>
    <property type="evidence" value="ECO:0007669"/>
    <property type="project" value="UniProtKB-SubCell"/>
</dbReference>
<dbReference type="GO" id="GO:0046872">
    <property type="term" value="F:metal ion binding"/>
    <property type="evidence" value="ECO:0007669"/>
    <property type="project" value="UniProtKB-KW"/>
</dbReference>
<dbReference type="GO" id="GO:0016653">
    <property type="term" value="F:oxidoreductase activity, acting on NAD(P)H, heme protein as acceptor"/>
    <property type="evidence" value="ECO:0007669"/>
    <property type="project" value="InterPro"/>
</dbReference>
<dbReference type="GO" id="GO:0006784">
    <property type="term" value="P:heme A biosynthetic process"/>
    <property type="evidence" value="ECO:0007669"/>
    <property type="project" value="UniProtKB-UniRule"/>
</dbReference>
<dbReference type="HAMAP" id="MF_01665">
    <property type="entry name" value="HemeA_synth_type2"/>
    <property type="match status" value="1"/>
</dbReference>
<dbReference type="InterPro" id="IPR003780">
    <property type="entry name" value="COX15/CtaA_fam"/>
</dbReference>
<dbReference type="InterPro" id="IPR023754">
    <property type="entry name" value="HemeA_Synthase_type2"/>
</dbReference>
<dbReference type="PANTHER" id="PTHR23289">
    <property type="entry name" value="CYTOCHROME C OXIDASE ASSEMBLY PROTEIN COX15"/>
    <property type="match status" value="1"/>
</dbReference>
<dbReference type="PANTHER" id="PTHR23289:SF2">
    <property type="entry name" value="CYTOCHROME C OXIDASE ASSEMBLY PROTEIN COX15 HOMOLOG"/>
    <property type="match status" value="1"/>
</dbReference>
<dbReference type="Pfam" id="PF02628">
    <property type="entry name" value="COX15-CtaA"/>
    <property type="match status" value="1"/>
</dbReference>
<keyword id="KW-1003">Cell membrane</keyword>
<keyword id="KW-0350">Heme biosynthesis</keyword>
<keyword id="KW-0408">Iron</keyword>
<keyword id="KW-0472">Membrane</keyword>
<keyword id="KW-0479">Metal-binding</keyword>
<keyword id="KW-0560">Oxidoreductase</keyword>
<keyword id="KW-1185">Reference proteome</keyword>
<keyword id="KW-0812">Transmembrane</keyword>
<keyword id="KW-1133">Transmembrane helix</keyword>
<sequence length="367" mass="40382">MASQSVAGIGGRTAAGEARAASPESRRMVAIWLFVSFALIVEMFGIGAYVQNMNAGLSIMAWQPVSGVIPPLTHAAWERMFALYKTIPQYKELNRGMDLAGFKAIFWPEWIHRMWGRLLGFDFGVPLVWFLWTGRIERRLRPWLVTLFVLGGVQGLIGWWMVASGFQPGLTEVSVFRLSVHYCFATLLAIAVFATALTVLKPAETRLPPEEAARYAGARRMAMGSIVLISIAIVAGTFLSGTHAYTIDNTFPLMQGRWVPPDYAALHPFWKNFFLNKAATQFDHRLLGTVAAVGVLAAVVAAIRADLPARARDAFLVMGALLIVQYILGVTTLVSKILDIGIVHQLNAVLLLAAAVWAWFELRGRPA</sequence>
<organism>
    <name type="scientific">Acidiphilium cryptum (strain JF-5)</name>
    <dbReference type="NCBI Taxonomy" id="349163"/>
    <lineage>
        <taxon>Bacteria</taxon>
        <taxon>Pseudomonadati</taxon>
        <taxon>Pseudomonadota</taxon>
        <taxon>Alphaproteobacteria</taxon>
        <taxon>Acetobacterales</taxon>
        <taxon>Acidocellaceae</taxon>
        <taxon>Acidiphilium</taxon>
    </lineage>
</organism>
<accession>A5FXV4</accession>
<reference key="1">
    <citation type="submission" date="2007-05" db="EMBL/GenBank/DDBJ databases">
        <title>Complete sequence of chromosome of Acidiphilium cryptum JF-5.</title>
        <authorList>
            <consortium name="US DOE Joint Genome Institute"/>
            <person name="Copeland A."/>
            <person name="Lucas S."/>
            <person name="Lapidus A."/>
            <person name="Barry K."/>
            <person name="Detter J.C."/>
            <person name="Glavina del Rio T."/>
            <person name="Hammon N."/>
            <person name="Israni S."/>
            <person name="Dalin E."/>
            <person name="Tice H."/>
            <person name="Pitluck S."/>
            <person name="Sims D."/>
            <person name="Brettin T."/>
            <person name="Bruce D."/>
            <person name="Han C."/>
            <person name="Schmutz J."/>
            <person name="Larimer F."/>
            <person name="Land M."/>
            <person name="Hauser L."/>
            <person name="Kyrpides N."/>
            <person name="Kim E."/>
            <person name="Magnuson T."/>
            <person name="Richardson P."/>
        </authorList>
    </citation>
    <scope>NUCLEOTIDE SEQUENCE [LARGE SCALE GENOMIC DNA]</scope>
    <source>
        <strain>JF-5</strain>
    </source>
</reference>